<accession>P22984</accession>
<evidence type="ECO:0000250" key="1"/>
<evidence type="ECO:0000256" key="2">
    <source>
        <dbReference type="SAM" id="MobiDB-lite"/>
    </source>
</evidence>
<evidence type="ECO:0000305" key="3"/>
<gene>
    <name type="primary">amdA</name>
</gene>
<protein>
    <recommendedName>
        <fullName>Amidase</fullName>
        <ecNumber>3.5.1.4</ecNumber>
    </recommendedName>
</protein>
<proteinExistence type="evidence at protein level"/>
<organism>
    <name type="scientific">Rhodococcus erythropolis</name>
    <name type="common">Arthrobacter picolinophilus</name>
    <dbReference type="NCBI Taxonomy" id="1833"/>
    <lineage>
        <taxon>Bacteria</taxon>
        <taxon>Bacillati</taxon>
        <taxon>Actinomycetota</taxon>
        <taxon>Actinomycetes</taxon>
        <taxon>Mycobacteriales</taxon>
        <taxon>Nocardiaceae</taxon>
        <taxon>Rhodococcus</taxon>
        <taxon>Rhodococcus erythropolis group</taxon>
    </lineage>
</organism>
<name>AMID_RHOER</name>
<sequence length="521" mass="54706">MATIRPDDKAIDAAARHYGITLDKTARLEWPALIDGALGSYDVVDQLYADEATPPTTSREHAVPSASENPLSAWYVTTSIPPTSDGVLTGRRVAIKDNVTVAGVPMMNGSRTVEGFTPSRDATVVTRLLAAGATVAGKAVCEDLCFSGSSFTPASGPVRNPWDRQREAGGSSGGSAALVANGDVDFAIGGDQGGSIRIPAAFCGVVGHKPTFGLVPYTGAFPIERTIDHLGPITRTVHDAALMLSVIAGRDGNDPRQADSVEAGDYLSTLDSDVDGLRIGIVREGFGHAVSQPEVDDAVRAAAHSLTEIGCTVEEVNIPWHLHAFHIWNVIATDGGAYQMLDGNGYGMNAEGLYDPELMAHFASRRIQHADALSETVKLVALTGHHGITTLGGASYGKARNLVPLARAAYDTALRQFDVLVMPTLPYVASELPAKDVDRATFITKALGMIANTAPFDVTGHPSLSVPAGLVNGLPVGMMITGRHFDDATVLRVGRAFEKLRGAFPTPAERASNSAPQLSPA</sequence>
<feature type="initiator methionine" description="Removed">
    <location>
        <position position="1"/>
    </location>
</feature>
<feature type="chain" id="PRO_0000105126" description="Amidase">
    <location>
        <begin position="2"/>
        <end position="521"/>
    </location>
</feature>
<feature type="region of interest" description="Disordered" evidence="2">
    <location>
        <begin position="155"/>
        <end position="174"/>
    </location>
</feature>
<feature type="active site" description="Charge relay system" evidence="1">
    <location>
        <position position="96"/>
    </location>
</feature>
<feature type="active site" description="Charge relay system" evidence="1">
    <location>
        <position position="171"/>
    </location>
</feature>
<feature type="active site" description="Acyl-ester intermediate" evidence="1">
    <location>
        <position position="195"/>
    </location>
</feature>
<reference key="1">
    <citation type="journal article" date="1991" name="Biochim. Biophys. Acta">
        <title>Cloning and characterization of an amidase gene from Rhodococcus species N-774 and its expression in Escherichia coli.</title>
        <authorList>
            <person name="Hashimoto Y."/>
            <person name="Nishiyama M."/>
            <person name="Ikehata O."/>
            <person name="Horinouchi S."/>
            <person name="Beppu T."/>
        </authorList>
    </citation>
    <scope>NUCLEOTIDE SEQUENCE [GENOMIC DNA]</scope>
    <source>
        <strain>N-774</strain>
    </source>
</reference>
<reference key="2">
    <citation type="journal article" date="1990" name="J. Bacteriol.">
        <title>Purification, cloning, and primary structure of an enantiomer-selective amidase from Brevibacterium sp. strain R312: structural evidence for genetic coupling with nitrile hydratase.</title>
        <authorList>
            <person name="Mayaux J.-F."/>
            <person name="Cerbelaud E."/>
            <person name="Soubrier F."/>
            <person name="Faucher D."/>
            <person name="Petre D."/>
        </authorList>
    </citation>
    <scope>NUCLEOTIDE SEQUENCE [GENOMIC DNA]</scope>
    <scope>PARTIAL PROTEIN SEQUENCE</scope>
    <source>
        <strain>Brevibacterium sp. R312</strain>
    </source>
</reference>
<comment type="function">
    <text>Hydrolyzes propionamides efficiently, and also at a lower efficiency, acetamide, acrylamide and indoleacetamide. This enzyme seems to be stereospecific and can lead to the production of a single enantiomer.</text>
</comment>
<comment type="catalytic activity">
    <reaction>
        <text>a monocarboxylic acid amide + H2O = a monocarboxylate + NH4(+)</text>
        <dbReference type="Rhea" id="RHEA:12020"/>
        <dbReference type="ChEBI" id="CHEBI:15377"/>
        <dbReference type="ChEBI" id="CHEBI:28938"/>
        <dbReference type="ChEBI" id="CHEBI:35757"/>
        <dbReference type="ChEBI" id="CHEBI:83628"/>
        <dbReference type="EC" id="3.5.1.4"/>
    </reaction>
</comment>
<comment type="subunit">
    <text>Homodimer.</text>
</comment>
<comment type="similarity">
    <text evidence="3">Belongs to the amidase family.</text>
</comment>
<keyword id="KW-0903">Direct protein sequencing</keyword>
<keyword id="KW-0378">Hydrolase</keyword>
<dbReference type="EC" id="3.5.1.4"/>
<dbReference type="EMBL" id="X54074">
    <property type="protein sequence ID" value="CAA38009.1"/>
    <property type="molecule type" value="Genomic_DNA"/>
</dbReference>
<dbReference type="EMBL" id="M60264">
    <property type="protein sequence ID" value="AAA62721.1"/>
    <property type="molecule type" value="Genomic_DNA"/>
</dbReference>
<dbReference type="SMR" id="P22984"/>
<dbReference type="STRING" id="1833.XU06_28840"/>
<dbReference type="BRENDA" id="3.5.1.4">
    <property type="organism ID" value="5389"/>
</dbReference>
<dbReference type="GO" id="GO:0004040">
    <property type="term" value="F:amidase activity"/>
    <property type="evidence" value="ECO:0007669"/>
    <property type="project" value="UniProtKB-EC"/>
</dbReference>
<dbReference type="Gene3D" id="3.90.1300.10">
    <property type="entry name" value="Amidase signature (AS) domain"/>
    <property type="match status" value="1"/>
</dbReference>
<dbReference type="Gene3D" id="1.10.20.60">
    <property type="entry name" value="Glu-tRNAGln amidotransferase C subunit, N-terminal domain"/>
    <property type="match status" value="1"/>
</dbReference>
<dbReference type="InterPro" id="IPR000120">
    <property type="entry name" value="Amidase"/>
</dbReference>
<dbReference type="InterPro" id="IPR020556">
    <property type="entry name" value="Amidase_CS"/>
</dbReference>
<dbReference type="InterPro" id="IPR023631">
    <property type="entry name" value="Amidase_dom"/>
</dbReference>
<dbReference type="InterPro" id="IPR036928">
    <property type="entry name" value="AS_sf"/>
</dbReference>
<dbReference type="NCBIfam" id="NF005565">
    <property type="entry name" value="PRK07235.1"/>
    <property type="match status" value="1"/>
</dbReference>
<dbReference type="PANTHER" id="PTHR11895:SF170">
    <property type="entry name" value="AMIDASE"/>
    <property type="match status" value="1"/>
</dbReference>
<dbReference type="PANTHER" id="PTHR11895">
    <property type="entry name" value="TRANSAMIDASE"/>
    <property type="match status" value="1"/>
</dbReference>
<dbReference type="Pfam" id="PF01425">
    <property type="entry name" value="Amidase"/>
    <property type="match status" value="1"/>
</dbReference>
<dbReference type="SUPFAM" id="SSF75304">
    <property type="entry name" value="Amidase signature (AS) enzymes"/>
    <property type="match status" value="1"/>
</dbReference>
<dbReference type="PROSITE" id="PS00571">
    <property type="entry name" value="AMIDASES"/>
    <property type="match status" value="1"/>
</dbReference>